<sequence>MPESLIAGIPVHFPFEPYPVQRAYMEKVIQCLRDGTNGVLESPTGTGKTLSLLCSSLAWIRTRQSEHQQQMVKMEKADFTGLGGGAAGGDLSELAKTMGRANNWGVPKVIYASRTHSQLTQAMRELKRTAYANMRSVVLGSRDQLCIHPEVMREQGNSNKTNMCKLRVHSKTCSFQMRVESRKDHPDLRGPSIMDIEDLVKVGQRLKICPYFASRELVPQADITFMPYNYLLDPKARKANKIELGNTIVILDEAHNIEKICEESASVQIKSSDVAMAIEDVTHIMQVFASGESQDMGGDEPKDFTLDDLTLLKEMLLEFEKAIDAVVVENAVEGTTFPASMMYELLGKANFTYGNVATIVSLLDKLVQYLLVASQQMTIRKGGTFTMLSDLLTIVFANKEDVMSKVYASFKVHVQLEEVKQGHGKQQGGKQHGGWLGKGTIAAATGSIKVAKIINFWCFNPGFGMEQLLNTQVRSVILTSGTLAPLKPLIAELAIPVAQHLENPHIVDQSQVYVKIIGTGPDRQQLISNYANRDNPKYISSLGQTILNVSRIVPDGLLVFFPSYPMLNKCVDAWQASGLWADISVKKPIFLEPRSKDQFTSTMEEFYQAIRDSKGAVFMAVCRGKVSEGLDFADRNGRAVIITGLPFPPLKDPKVILKRRYLEANRTRENQLLSGQEWYNLDATRAVNQAIGRVIRHRNDYGAILLCDSRFKDASQVQQLSKWIRGHLGDRPQCSPFGPIVRELRQFFKNAEANMKLPDERETDSPLETVCKTENEPIAAIPKVKREPGSNATFKSANESAIKVEMANSIKTWTPADYASAAGRKLGGAAPNAMDFMSRLDSNVSSIDFNCCMDSKSGSSGMVKIHKRERSSPTQPESSSQVSKKRYKLVENIKVEPSSSQVKEAPAERADFLRELRSLVTQDQFRRFGKALLEYKDGTYESFQALMVILLDVLSAPKVRYMLVGMRKYLKNEHKDEFDQKVGKL</sequence>
<comment type="function">
    <text evidence="2">A probable ATP-dependent DNA helicase implicated in DNA repair and the maintenance of genomic stability. Acts as an anti-recombinase to counteract toxic recombination and limit crossover during meiosis. Regulates meiotic recombination and crossover homeostasis by physically dissociating strand invasion events and thereby promotes noncrossover repair by meiotic synthesis dependent strand annealing (SDSA) as well as disassembly of D loop recombination intermediates.</text>
</comment>
<comment type="catalytic activity">
    <reaction evidence="2">
        <text>ATP + H2O = ADP + phosphate + H(+)</text>
        <dbReference type="Rhea" id="RHEA:13065"/>
        <dbReference type="ChEBI" id="CHEBI:15377"/>
        <dbReference type="ChEBI" id="CHEBI:15378"/>
        <dbReference type="ChEBI" id="CHEBI:30616"/>
        <dbReference type="ChEBI" id="CHEBI:43474"/>
        <dbReference type="ChEBI" id="CHEBI:456216"/>
    </reaction>
</comment>
<comment type="subcellular location">
    <subcellularLocation>
        <location evidence="2">Nucleus</location>
    </subcellularLocation>
</comment>
<comment type="similarity">
    <text evidence="2">Belongs to the helicase family. RAD3/XPD subfamily.</text>
</comment>
<proteinExistence type="inferred from homology"/>
<evidence type="ECO:0000250" key="1"/>
<evidence type="ECO:0000255" key="2">
    <source>
        <dbReference type="HAMAP-Rule" id="MF_03065"/>
    </source>
</evidence>
<evidence type="ECO:0000256" key="3">
    <source>
        <dbReference type="SAM" id="MobiDB-lite"/>
    </source>
</evidence>
<organism>
    <name type="scientific">Drosophila yakuba</name>
    <name type="common">Fruit fly</name>
    <dbReference type="NCBI Taxonomy" id="7245"/>
    <lineage>
        <taxon>Eukaryota</taxon>
        <taxon>Metazoa</taxon>
        <taxon>Ecdysozoa</taxon>
        <taxon>Arthropoda</taxon>
        <taxon>Hexapoda</taxon>
        <taxon>Insecta</taxon>
        <taxon>Pterygota</taxon>
        <taxon>Neoptera</taxon>
        <taxon>Endopterygota</taxon>
        <taxon>Diptera</taxon>
        <taxon>Brachycera</taxon>
        <taxon>Muscomorpha</taxon>
        <taxon>Ephydroidea</taxon>
        <taxon>Drosophilidae</taxon>
        <taxon>Drosophila</taxon>
        <taxon>Sophophora</taxon>
    </lineage>
</organism>
<feature type="chain" id="PRO_0000370630" description="Regulator of telomere elongation helicase 1 homolog">
    <location>
        <begin position="1"/>
        <end position="985"/>
    </location>
</feature>
<feature type="domain" description="Helicase ATP-binding" evidence="2">
    <location>
        <begin position="7"/>
        <end position="303"/>
    </location>
</feature>
<feature type="region of interest" description="Disordered" evidence="3">
    <location>
        <begin position="858"/>
        <end position="884"/>
    </location>
</feature>
<feature type="short sequence motif" description="DEAH box">
    <location>
        <begin position="252"/>
        <end position="255"/>
    </location>
</feature>
<feature type="compositionally biased region" description="Polar residues" evidence="3">
    <location>
        <begin position="872"/>
        <end position="882"/>
    </location>
</feature>
<feature type="binding site" evidence="2">
    <location>
        <begin position="42"/>
        <end position="49"/>
    </location>
    <ligand>
        <name>ATP</name>
        <dbReference type="ChEBI" id="CHEBI:30616"/>
    </ligand>
</feature>
<feature type="binding site" evidence="2">
    <location>
        <position position="146"/>
    </location>
    <ligand>
        <name>[4Fe-4S] cluster</name>
        <dbReference type="ChEBI" id="CHEBI:49883"/>
    </ligand>
</feature>
<feature type="binding site" evidence="2">
    <location>
        <position position="164"/>
    </location>
    <ligand>
        <name>[4Fe-4S] cluster</name>
        <dbReference type="ChEBI" id="CHEBI:49883"/>
    </ligand>
</feature>
<feature type="binding site" evidence="2">
    <location>
        <position position="173"/>
    </location>
    <ligand>
        <name>[4Fe-4S] cluster</name>
        <dbReference type="ChEBI" id="CHEBI:49883"/>
    </ligand>
</feature>
<feature type="binding site" evidence="2">
    <location>
        <position position="209"/>
    </location>
    <ligand>
        <name>[4Fe-4S] cluster</name>
        <dbReference type="ChEBI" id="CHEBI:49883"/>
    </ligand>
</feature>
<feature type="modified residue" description="Phosphothreonine" evidence="1">
    <location>
        <position position="874"/>
    </location>
</feature>
<dbReference type="EC" id="5.6.2.-" evidence="2"/>
<dbReference type="EMBL" id="CM000162">
    <property type="protein sequence ID" value="EDX01081.1"/>
    <property type="molecule type" value="Genomic_DNA"/>
</dbReference>
<dbReference type="SMR" id="B4PZB4"/>
<dbReference type="EnsemblMetazoa" id="FBtr0262943">
    <property type="protein sequence ID" value="FBpp0261435"/>
    <property type="gene ID" value="FBgn0233951"/>
</dbReference>
<dbReference type="EnsemblMetazoa" id="XM_002099937.4">
    <property type="protein sequence ID" value="XP_002099973.1"/>
    <property type="gene ID" value="LOC6524109"/>
</dbReference>
<dbReference type="GeneID" id="6524109"/>
<dbReference type="KEGG" id="dya:Dyak_GE16425"/>
<dbReference type="CTD" id="51750"/>
<dbReference type="eggNOG" id="KOG1132">
    <property type="taxonomic scope" value="Eukaryota"/>
</dbReference>
<dbReference type="HOGENOM" id="CLU_006515_4_0_1"/>
<dbReference type="OMA" id="NCATIVA"/>
<dbReference type="OrthoDB" id="19182at2759"/>
<dbReference type="PhylomeDB" id="B4PZB4"/>
<dbReference type="Proteomes" id="UP000002282">
    <property type="component" value="Chromosome X"/>
</dbReference>
<dbReference type="GO" id="GO:0005634">
    <property type="term" value="C:nucleus"/>
    <property type="evidence" value="ECO:0000250"/>
    <property type="project" value="UniProtKB"/>
</dbReference>
<dbReference type="GO" id="GO:0051539">
    <property type="term" value="F:4 iron, 4 sulfur cluster binding"/>
    <property type="evidence" value="ECO:0007669"/>
    <property type="project" value="UniProtKB-UniRule"/>
</dbReference>
<dbReference type="GO" id="GO:0005524">
    <property type="term" value="F:ATP binding"/>
    <property type="evidence" value="ECO:0000250"/>
    <property type="project" value="UniProtKB"/>
</dbReference>
<dbReference type="GO" id="GO:0016887">
    <property type="term" value="F:ATP hydrolysis activity"/>
    <property type="evidence" value="ECO:0007669"/>
    <property type="project" value="RHEA"/>
</dbReference>
<dbReference type="GO" id="GO:0003682">
    <property type="term" value="F:chromatin binding"/>
    <property type="evidence" value="ECO:0007669"/>
    <property type="project" value="EnsemblMetazoa"/>
</dbReference>
<dbReference type="GO" id="GO:0003677">
    <property type="term" value="F:DNA binding"/>
    <property type="evidence" value="ECO:0007669"/>
    <property type="project" value="UniProtKB-UniRule"/>
</dbReference>
<dbReference type="GO" id="GO:0003678">
    <property type="term" value="F:DNA helicase activity"/>
    <property type="evidence" value="ECO:0000250"/>
    <property type="project" value="UniProtKB"/>
</dbReference>
<dbReference type="GO" id="GO:0070182">
    <property type="term" value="F:DNA polymerase binding"/>
    <property type="evidence" value="ECO:0007669"/>
    <property type="project" value="TreeGrafter"/>
</dbReference>
<dbReference type="GO" id="GO:0046872">
    <property type="term" value="F:metal ion binding"/>
    <property type="evidence" value="ECO:0007669"/>
    <property type="project" value="UniProtKB-UniRule"/>
</dbReference>
<dbReference type="GO" id="GO:0006310">
    <property type="term" value="P:DNA recombination"/>
    <property type="evidence" value="ECO:0007669"/>
    <property type="project" value="InterPro"/>
</dbReference>
<dbReference type="GO" id="GO:0006281">
    <property type="term" value="P:DNA repair"/>
    <property type="evidence" value="ECO:0007669"/>
    <property type="project" value="UniProtKB-UniRule"/>
</dbReference>
<dbReference type="GO" id="GO:0006260">
    <property type="term" value="P:DNA replication"/>
    <property type="evidence" value="ECO:0007669"/>
    <property type="project" value="InterPro"/>
</dbReference>
<dbReference type="GO" id="GO:0036098">
    <property type="term" value="P:male germ-line stem cell population maintenance"/>
    <property type="evidence" value="ECO:0007669"/>
    <property type="project" value="EnsemblMetazoa"/>
</dbReference>
<dbReference type="GO" id="GO:0045910">
    <property type="term" value="P:negative regulation of DNA recombination"/>
    <property type="evidence" value="ECO:0007669"/>
    <property type="project" value="TreeGrafter"/>
</dbReference>
<dbReference type="GO" id="GO:1904430">
    <property type="term" value="P:negative regulation of t-circle formation"/>
    <property type="evidence" value="ECO:0007669"/>
    <property type="project" value="TreeGrafter"/>
</dbReference>
<dbReference type="GO" id="GO:0010569">
    <property type="term" value="P:regulation of double-strand break repair via homologous recombination"/>
    <property type="evidence" value="ECO:0000250"/>
    <property type="project" value="UniProtKB"/>
</dbReference>
<dbReference type="GO" id="GO:0090657">
    <property type="term" value="P:telomeric loop disassembly"/>
    <property type="evidence" value="ECO:0007669"/>
    <property type="project" value="TreeGrafter"/>
</dbReference>
<dbReference type="CDD" id="cd17970">
    <property type="entry name" value="DEAHc_FancJ"/>
    <property type="match status" value="1"/>
</dbReference>
<dbReference type="CDD" id="cd18788">
    <property type="entry name" value="SF2_C_XPD"/>
    <property type="match status" value="1"/>
</dbReference>
<dbReference type="FunFam" id="3.40.50.300:FF:000431">
    <property type="entry name" value="Regulator of telomere elongation helicase 1"/>
    <property type="match status" value="1"/>
</dbReference>
<dbReference type="FunFam" id="1.20.1160.20:FF:000011">
    <property type="entry name" value="Regulator of telomere elongation helicase 1 homolog"/>
    <property type="match status" value="1"/>
</dbReference>
<dbReference type="Gene3D" id="1.20.1160.20">
    <property type="match status" value="1"/>
</dbReference>
<dbReference type="Gene3D" id="3.40.50.300">
    <property type="entry name" value="P-loop containing nucleotide triphosphate hydrolases"/>
    <property type="match status" value="2"/>
</dbReference>
<dbReference type="HAMAP" id="MF_03065">
    <property type="entry name" value="RTEL1"/>
    <property type="match status" value="1"/>
</dbReference>
<dbReference type="InterPro" id="IPR006555">
    <property type="entry name" value="ATP-dep_Helicase_C"/>
</dbReference>
<dbReference type="InterPro" id="IPR045028">
    <property type="entry name" value="DinG/Rad3-like"/>
</dbReference>
<dbReference type="InterPro" id="IPR014013">
    <property type="entry name" value="Helic_SF1/SF2_ATP-bd_DinG/Rad3"/>
</dbReference>
<dbReference type="InterPro" id="IPR006554">
    <property type="entry name" value="Helicase-like_DEXD_c2"/>
</dbReference>
<dbReference type="InterPro" id="IPR027417">
    <property type="entry name" value="P-loop_NTPase"/>
</dbReference>
<dbReference type="InterPro" id="IPR010614">
    <property type="entry name" value="RAD3-like_helicase_DEAD"/>
</dbReference>
<dbReference type="InterPro" id="IPR013020">
    <property type="entry name" value="Rad3/Chl1-like"/>
</dbReference>
<dbReference type="InterPro" id="IPR030845">
    <property type="entry name" value="RTEL1"/>
</dbReference>
<dbReference type="NCBIfam" id="TIGR00604">
    <property type="entry name" value="rad3"/>
    <property type="match status" value="1"/>
</dbReference>
<dbReference type="PANTHER" id="PTHR11472">
    <property type="entry name" value="DNA REPAIR DEAD HELICASE RAD3/XP-D SUBFAMILY MEMBER"/>
    <property type="match status" value="1"/>
</dbReference>
<dbReference type="PANTHER" id="PTHR11472:SF34">
    <property type="entry name" value="REGULATOR OF TELOMERE ELONGATION HELICASE 1"/>
    <property type="match status" value="1"/>
</dbReference>
<dbReference type="Pfam" id="PF23109">
    <property type="entry name" value="ARCH_RTEL1"/>
    <property type="match status" value="1"/>
</dbReference>
<dbReference type="Pfam" id="PF06733">
    <property type="entry name" value="DEAD_2"/>
    <property type="match status" value="1"/>
</dbReference>
<dbReference type="Pfam" id="PF13307">
    <property type="entry name" value="Helicase_C_2"/>
    <property type="match status" value="1"/>
</dbReference>
<dbReference type="SMART" id="SM00488">
    <property type="entry name" value="DEXDc2"/>
    <property type="match status" value="1"/>
</dbReference>
<dbReference type="SMART" id="SM00491">
    <property type="entry name" value="HELICc2"/>
    <property type="match status" value="1"/>
</dbReference>
<dbReference type="SUPFAM" id="SSF52540">
    <property type="entry name" value="P-loop containing nucleoside triphosphate hydrolases"/>
    <property type="match status" value="2"/>
</dbReference>
<dbReference type="PROSITE" id="PS51193">
    <property type="entry name" value="HELICASE_ATP_BIND_2"/>
    <property type="match status" value="1"/>
</dbReference>
<keyword id="KW-0004">4Fe-4S</keyword>
<keyword id="KW-0067">ATP-binding</keyword>
<keyword id="KW-0227">DNA damage</keyword>
<keyword id="KW-0234">DNA repair</keyword>
<keyword id="KW-0238">DNA-binding</keyword>
<keyword id="KW-0347">Helicase</keyword>
<keyword id="KW-0378">Hydrolase</keyword>
<keyword id="KW-0408">Iron</keyword>
<keyword id="KW-0411">Iron-sulfur</keyword>
<keyword id="KW-0413">Isomerase</keyword>
<keyword id="KW-0479">Metal-binding</keyword>
<keyword id="KW-0547">Nucleotide-binding</keyword>
<keyword id="KW-0539">Nucleus</keyword>
<keyword id="KW-0597">Phosphoprotein</keyword>
<accession>B4PZB4</accession>
<name>RTEL1_DROYA</name>
<gene>
    <name type="ORF">GE16425</name>
</gene>
<reference key="1">
    <citation type="journal article" date="2007" name="Nature">
        <title>Evolution of genes and genomes on the Drosophila phylogeny.</title>
        <authorList>
            <consortium name="Drosophila 12 genomes consortium"/>
        </authorList>
    </citation>
    <scope>NUCLEOTIDE SEQUENCE [LARGE SCALE GENOMIC DNA]</scope>
    <source>
        <strain>Tai18E2 / Tucson 14021-0261.01</strain>
    </source>
</reference>
<protein>
    <recommendedName>
        <fullName evidence="2">Regulator of telomere elongation helicase 1 homolog</fullName>
        <ecNumber evidence="2">5.6.2.-</ecNumber>
    </recommendedName>
</protein>